<keyword id="KW-0010">Activator</keyword>
<keyword id="KW-0217">Developmental protein</keyword>
<keyword id="KW-0221">Differentiation</keyword>
<keyword id="KW-0238">DNA-binding</keyword>
<keyword id="KW-0371">Homeobox</keyword>
<keyword id="KW-0524">Neurogenesis</keyword>
<keyword id="KW-0539">Nucleus</keyword>
<keyword id="KW-1185">Reference proteome</keyword>
<keyword id="KW-0716">Sensory transduction</keyword>
<keyword id="KW-0804">Transcription</keyword>
<keyword id="KW-0805">Transcription regulation</keyword>
<keyword id="KW-0844">Vision</keyword>
<reference key="1">
    <citation type="journal article" date="2002" name="Mol. Vis.">
        <title>Cloning and characterization of the canine photoreceptor specific cone-rod homeobox (CRX) gene and evaluation as a candidate for early onset photoreceptor diseases in the dog.</title>
        <authorList>
            <person name="Akhmedov N.B."/>
            <person name="Baldwin V.J."/>
            <person name="Zangerl B."/>
            <person name="Kijas J.W."/>
            <person name="Hunter L."/>
            <person name="Minoofar K.D."/>
            <person name="Mellersh C."/>
            <person name="Ostrander E.A."/>
            <person name="Acland G.M."/>
            <person name="Farber D.B."/>
            <person name="Aguirre G.D."/>
        </authorList>
    </citation>
    <scope>NUCLEOTIDE SEQUENCE [MRNA]</scope>
</reference>
<reference key="2">
    <citation type="submission" date="2002-08" db="EMBL/GenBank/DDBJ databases">
        <title>Characterization of the canine CRX gene.</title>
        <authorList>
            <person name="Dekomien G."/>
            <person name="Epplen J.T."/>
        </authorList>
    </citation>
    <scope>NUCLEOTIDE SEQUENCE [GENOMIC DNA]</scope>
</reference>
<proteinExistence type="evidence at transcript level"/>
<protein>
    <recommendedName>
        <fullName>Cone-rod homeobox protein</fullName>
    </recommendedName>
</protein>
<comment type="function">
    <text evidence="1">Transcription factor that binds and transactivates the sequence 5'-TAATC[CA]-3' which is found upstream of several photoreceptor-specific genes, including the opsin genes. Acts synergistically with other transcription factors, such as NRL, RORB and RAX, to regulate photoreceptor cell-specific gene transcription. Essential for the maintenance of mammalian photoreceptors (By similarity).</text>
</comment>
<comment type="subunit">
    <text evidence="1">Interacts (via the homeobox) with NRL (via the leucine-zipper domain). Interacts with PDC, RAX2, RORB and SCA7 (By similarity).</text>
</comment>
<comment type="subcellular location">
    <subcellularLocation>
        <location evidence="2">Nucleus</location>
    </subcellularLocation>
</comment>
<comment type="tissue specificity">
    <text>Retina.</text>
</comment>
<comment type="similarity">
    <text evidence="4">Belongs to the paired homeobox family.</text>
</comment>
<feature type="chain" id="PRO_0000048861" description="Cone-rod homeobox protein">
    <location>
        <begin position="1"/>
        <end position="299"/>
    </location>
</feature>
<feature type="DNA-binding region" description="Homeobox" evidence="2">
    <location>
        <begin position="39"/>
        <end position="98"/>
    </location>
</feature>
<feature type="region of interest" description="Disordered" evidence="3">
    <location>
        <begin position="92"/>
        <end position="154"/>
    </location>
</feature>
<feature type="region of interest" description="Disordered" evidence="3">
    <location>
        <begin position="236"/>
        <end position="257"/>
    </location>
</feature>
<feature type="compositionally biased region" description="Low complexity" evidence="3">
    <location>
        <begin position="141"/>
        <end position="153"/>
    </location>
</feature>
<feature type="compositionally biased region" description="Low complexity" evidence="3">
    <location>
        <begin position="236"/>
        <end position="247"/>
    </location>
</feature>
<feature type="compositionally biased region" description="Polar residues" evidence="3">
    <location>
        <begin position="248"/>
        <end position="257"/>
    </location>
</feature>
<name>CRX_CANLF</name>
<organism>
    <name type="scientific">Canis lupus familiaris</name>
    <name type="common">Dog</name>
    <name type="synonym">Canis familiaris</name>
    <dbReference type="NCBI Taxonomy" id="9615"/>
    <lineage>
        <taxon>Eukaryota</taxon>
        <taxon>Metazoa</taxon>
        <taxon>Chordata</taxon>
        <taxon>Craniata</taxon>
        <taxon>Vertebrata</taxon>
        <taxon>Euteleostomi</taxon>
        <taxon>Mammalia</taxon>
        <taxon>Eutheria</taxon>
        <taxon>Laurasiatheria</taxon>
        <taxon>Carnivora</taxon>
        <taxon>Caniformia</taxon>
        <taxon>Canidae</taxon>
        <taxon>Canis</taxon>
    </lineage>
</organism>
<sequence length="299" mass="32343">MMAYMNPGPHYSVNALALSGPSVDLMHQAVSYPSAPRKQRRERTTFTRSQLEELEALFAKTQYPDVYAREEVALKINLPESRVQVWFKNRRAKCRQQRQQQKEQPQPPGAQTKARPAKRKAGMSPRSSSDVCPDPLGISDSYSPPLLGPSGSPTTAVATVSIWSPASESPLPEAQRGGLVASGPPLTSTPYAMTYAPASAFCSSPSAYGSPSSYFSGLDPYLSPMVPQLGGPALSPLSGPSVGPSLAQSPTSLSGQSYGTYSPVDSLEFKDPTGTWKFTYNPMDPLDYKDQSAWKFQIL</sequence>
<dbReference type="EMBL" id="AF454668">
    <property type="protein sequence ID" value="AAL91721.1"/>
    <property type="molecule type" value="mRNA"/>
</dbReference>
<dbReference type="EMBL" id="AJ507727">
    <property type="protein sequence ID" value="CAD45642.1"/>
    <property type="molecule type" value="Genomic_DNA"/>
</dbReference>
<dbReference type="EMBL" id="AJ507728">
    <property type="protein sequence ID" value="CAD45642.1"/>
    <property type="status" value="JOINED"/>
    <property type="molecule type" value="Genomic_DNA"/>
</dbReference>
<dbReference type="EMBL" id="AJ507729">
    <property type="protein sequence ID" value="CAD45642.1"/>
    <property type="status" value="JOINED"/>
    <property type="molecule type" value="Genomic_DNA"/>
</dbReference>
<dbReference type="RefSeq" id="NP_001003049.1">
    <property type="nucleotide sequence ID" value="NM_001003049.1"/>
</dbReference>
<dbReference type="SMR" id="Q8SQ03"/>
<dbReference type="FunCoup" id="Q8SQ03">
    <property type="interactions" value="9"/>
</dbReference>
<dbReference type="STRING" id="9615.ENSCAFP00000006035"/>
<dbReference type="PaxDb" id="9612-ENSCAFP00000006035"/>
<dbReference type="GeneID" id="403577"/>
<dbReference type="KEGG" id="cfa:403577"/>
<dbReference type="CTD" id="1406"/>
<dbReference type="eggNOG" id="KOG2251">
    <property type="taxonomic scope" value="Eukaryota"/>
</dbReference>
<dbReference type="InParanoid" id="Q8SQ03"/>
<dbReference type="OrthoDB" id="6159439at2759"/>
<dbReference type="Proteomes" id="UP000002254">
    <property type="component" value="Unplaced"/>
</dbReference>
<dbReference type="Proteomes" id="UP000694429">
    <property type="component" value="Unplaced"/>
</dbReference>
<dbReference type="Proteomes" id="UP000694542">
    <property type="component" value="Unplaced"/>
</dbReference>
<dbReference type="Proteomes" id="UP000805418">
    <property type="component" value="Unplaced"/>
</dbReference>
<dbReference type="GO" id="GO:0005634">
    <property type="term" value="C:nucleus"/>
    <property type="evidence" value="ECO:0000250"/>
    <property type="project" value="UniProtKB"/>
</dbReference>
<dbReference type="GO" id="GO:0003700">
    <property type="term" value="F:DNA-binding transcription factor activity"/>
    <property type="evidence" value="ECO:0000250"/>
    <property type="project" value="UniProtKB"/>
</dbReference>
<dbReference type="GO" id="GO:0000981">
    <property type="term" value="F:DNA-binding transcription factor activity, RNA polymerase II-specific"/>
    <property type="evidence" value="ECO:0000318"/>
    <property type="project" value="GO_Central"/>
</dbReference>
<dbReference type="GO" id="GO:0016922">
    <property type="term" value="F:nuclear receptor binding"/>
    <property type="evidence" value="ECO:0000250"/>
    <property type="project" value="UniProtKB"/>
</dbReference>
<dbReference type="GO" id="GO:0000978">
    <property type="term" value="F:RNA polymerase II cis-regulatory region sequence-specific DNA binding"/>
    <property type="evidence" value="ECO:0000318"/>
    <property type="project" value="GO_Central"/>
</dbReference>
<dbReference type="GO" id="GO:0030154">
    <property type="term" value="P:cell differentiation"/>
    <property type="evidence" value="ECO:0007669"/>
    <property type="project" value="UniProtKB-KW"/>
</dbReference>
<dbReference type="GO" id="GO:0007399">
    <property type="term" value="P:nervous system development"/>
    <property type="evidence" value="ECO:0007669"/>
    <property type="project" value="UniProtKB-KW"/>
</dbReference>
<dbReference type="GO" id="GO:0006355">
    <property type="term" value="P:regulation of DNA-templated transcription"/>
    <property type="evidence" value="ECO:0000250"/>
    <property type="project" value="UniProtKB"/>
</dbReference>
<dbReference type="GO" id="GO:0006357">
    <property type="term" value="P:regulation of transcription by RNA polymerase II"/>
    <property type="evidence" value="ECO:0000318"/>
    <property type="project" value="GO_Central"/>
</dbReference>
<dbReference type="GO" id="GO:0007601">
    <property type="term" value="P:visual perception"/>
    <property type="evidence" value="ECO:0007669"/>
    <property type="project" value="UniProtKB-KW"/>
</dbReference>
<dbReference type="CDD" id="cd00086">
    <property type="entry name" value="homeodomain"/>
    <property type="match status" value="1"/>
</dbReference>
<dbReference type="FunFam" id="1.10.10.60:FF:000068">
    <property type="entry name" value="Orthodenticle homeobox 1"/>
    <property type="match status" value="1"/>
</dbReference>
<dbReference type="Gene3D" id="1.10.10.60">
    <property type="entry name" value="Homeodomain-like"/>
    <property type="match status" value="1"/>
</dbReference>
<dbReference type="InterPro" id="IPR001356">
    <property type="entry name" value="HD"/>
</dbReference>
<dbReference type="InterPro" id="IPR017970">
    <property type="entry name" value="Homeobox_CS"/>
</dbReference>
<dbReference type="InterPro" id="IPR009057">
    <property type="entry name" value="Homeodomain-like_sf"/>
</dbReference>
<dbReference type="InterPro" id="IPR013851">
    <property type="entry name" value="Otx_TF_C"/>
</dbReference>
<dbReference type="PANTHER" id="PTHR45793:SF22">
    <property type="entry name" value="CONE-ROD HOMEOBOX PROTEIN"/>
    <property type="match status" value="1"/>
</dbReference>
<dbReference type="PANTHER" id="PTHR45793">
    <property type="entry name" value="HOMEOBOX PROTEIN"/>
    <property type="match status" value="1"/>
</dbReference>
<dbReference type="Pfam" id="PF00046">
    <property type="entry name" value="Homeodomain"/>
    <property type="match status" value="1"/>
</dbReference>
<dbReference type="Pfam" id="PF03529">
    <property type="entry name" value="TF_Otx"/>
    <property type="match status" value="1"/>
</dbReference>
<dbReference type="SMART" id="SM00389">
    <property type="entry name" value="HOX"/>
    <property type="match status" value="1"/>
</dbReference>
<dbReference type="SUPFAM" id="SSF46689">
    <property type="entry name" value="Homeodomain-like"/>
    <property type="match status" value="1"/>
</dbReference>
<dbReference type="PROSITE" id="PS00027">
    <property type="entry name" value="HOMEOBOX_1"/>
    <property type="match status" value="1"/>
</dbReference>
<dbReference type="PROSITE" id="PS50071">
    <property type="entry name" value="HOMEOBOX_2"/>
    <property type="match status" value="1"/>
</dbReference>
<evidence type="ECO:0000250" key="1"/>
<evidence type="ECO:0000255" key="2">
    <source>
        <dbReference type="PROSITE-ProRule" id="PRU00108"/>
    </source>
</evidence>
<evidence type="ECO:0000256" key="3">
    <source>
        <dbReference type="SAM" id="MobiDB-lite"/>
    </source>
</evidence>
<evidence type="ECO:0000305" key="4"/>
<accession>Q8SQ03</accession>
<gene>
    <name type="primary">CRX</name>
</gene>